<proteinExistence type="inferred from homology"/>
<accession>C3MY94</accession>
<protein>
    <recommendedName>
        <fullName evidence="1">Large ribosomal subunit protein eL24</fullName>
    </recommendedName>
    <alternativeName>
        <fullName evidence="2">50S ribosomal protein L24e</fullName>
    </alternativeName>
</protein>
<name>RL24E_SACI4</name>
<gene>
    <name evidence="1" type="primary">rpl24e</name>
    <name type="ordered locus">M1425_1907</name>
</gene>
<sequence>MPTTRQCSFCGHEIPPGTGLMYVRNDGTMLWFCSSKCRKSMLKYHRDPKKYKWTTRYMKVR</sequence>
<organism>
    <name type="scientific">Saccharolobus islandicus (strain M.14.25 / Kamchatka #1)</name>
    <name type="common">Sulfolobus islandicus</name>
    <dbReference type="NCBI Taxonomy" id="427317"/>
    <lineage>
        <taxon>Archaea</taxon>
        <taxon>Thermoproteota</taxon>
        <taxon>Thermoprotei</taxon>
        <taxon>Sulfolobales</taxon>
        <taxon>Sulfolobaceae</taxon>
        <taxon>Saccharolobus</taxon>
    </lineage>
</organism>
<reference key="1">
    <citation type="journal article" date="2009" name="Proc. Natl. Acad. Sci. U.S.A.">
        <title>Biogeography of the Sulfolobus islandicus pan-genome.</title>
        <authorList>
            <person name="Reno M.L."/>
            <person name="Held N.L."/>
            <person name="Fields C.J."/>
            <person name="Burke P.V."/>
            <person name="Whitaker R.J."/>
        </authorList>
    </citation>
    <scope>NUCLEOTIDE SEQUENCE [LARGE SCALE GENOMIC DNA]</scope>
    <source>
        <strain>M.14.25 / Kamchatka #1</strain>
    </source>
</reference>
<comment type="function">
    <text evidence="1">Binds to the 23S rRNA.</text>
</comment>
<comment type="cofactor">
    <cofactor evidence="1">
        <name>Zn(2+)</name>
        <dbReference type="ChEBI" id="CHEBI:29105"/>
    </cofactor>
    <text evidence="1">Binds 1 zinc ion per subunit.</text>
</comment>
<comment type="subunit">
    <text evidence="1">Part of the 50S ribosomal subunit. Forms a cluster with proteins L3 and L14.</text>
</comment>
<comment type="similarity">
    <text evidence="1">Belongs to the eukaryotic ribosomal protein eL24 family.</text>
</comment>
<feature type="chain" id="PRO_1000212912" description="Large ribosomal subunit protein eL24">
    <location>
        <begin position="1"/>
        <end position="61"/>
    </location>
</feature>
<feature type="zinc finger region" description="C4-type" evidence="1">
    <location>
        <begin position="7"/>
        <end position="37"/>
    </location>
</feature>
<feature type="binding site" evidence="1">
    <location>
        <position position="7"/>
    </location>
    <ligand>
        <name>Zn(2+)</name>
        <dbReference type="ChEBI" id="CHEBI:29105"/>
    </ligand>
</feature>
<feature type="binding site" evidence="1">
    <location>
        <position position="10"/>
    </location>
    <ligand>
        <name>Zn(2+)</name>
        <dbReference type="ChEBI" id="CHEBI:29105"/>
    </ligand>
</feature>
<feature type="binding site" evidence="1">
    <location>
        <position position="33"/>
    </location>
    <ligand>
        <name>Zn(2+)</name>
        <dbReference type="ChEBI" id="CHEBI:29105"/>
    </ligand>
</feature>
<feature type="binding site" evidence="1">
    <location>
        <position position="37"/>
    </location>
    <ligand>
        <name>Zn(2+)</name>
        <dbReference type="ChEBI" id="CHEBI:29105"/>
    </ligand>
</feature>
<keyword id="KW-0479">Metal-binding</keyword>
<keyword id="KW-0687">Ribonucleoprotein</keyword>
<keyword id="KW-0689">Ribosomal protein</keyword>
<keyword id="KW-0694">RNA-binding</keyword>
<keyword id="KW-0699">rRNA-binding</keyword>
<keyword id="KW-0862">Zinc</keyword>
<keyword id="KW-0863">Zinc-finger</keyword>
<evidence type="ECO:0000255" key="1">
    <source>
        <dbReference type="HAMAP-Rule" id="MF_00773"/>
    </source>
</evidence>
<evidence type="ECO:0000305" key="2"/>
<dbReference type="EMBL" id="CP001400">
    <property type="protein sequence ID" value="ACP38651.1"/>
    <property type="molecule type" value="Genomic_DNA"/>
</dbReference>
<dbReference type="RefSeq" id="WP_012711880.1">
    <property type="nucleotide sequence ID" value="NC_012588.1"/>
</dbReference>
<dbReference type="SMR" id="C3MY94"/>
<dbReference type="KEGG" id="sia:M1425_1907"/>
<dbReference type="HOGENOM" id="CLU_190191_0_0_2"/>
<dbReference type="Proteomes" id="UP000001350">
    <property type="component" value="Chromosome"/>
</dbReference>
<dbReference type="GO" id="GO:1990904">
    <property type="term" value="C:ribonucleoprotein complex"/>
    <property type="evidence" value="ECO:0007669"/>
    <property type="project" value="UniProtKB-KW"/>
</dbReference>
<dbReference type="GO" id="GO:0005840">
    <property type="term" value="C:ribosome"/>
    <property type="evidence" value="ECO:0007669"/>
    <property type="project" value="UniProtKB-KW"/>
</dbReference>
<dbReference type="GO" id="GO:0019843">
    <property type="term" value="F:rRNA binding"/>
    <property type="evidence" value="ECO:0007669"/>
    <property type="project" value="UniProtKB-UniRule"/>
</dbReference>
<dbReference type="GO" id="GO:0003735">
    <property type="term" value="F:structural constituent of ribosome"/>
    <property type="evidence" value="ECO:0007669"/>
    <property type="project" value="InterPro"/>
</dbReference>
<dbReference type="GO" id="GO:0008270">
    <property type="term" value="F:zinc ion binding"/>
    <property type="evidence" value="ECO:0007669"/>
    <property type="project" value="UniProtKB-UniRule"/>
</dbReference>
<dbReference type="GO" id="GO:0006412">
    <property type="term" value="P:translation"/>
    <property type="evidence" value="ECO:0007669"/>
    <property type="project" value="UniProtKB-UniRule"/>
</dbReference>
<dbReference type="CDD" id="cd00472">
    <property type="entry name" value="Ribosomal_L24e_L24"/>
    <property type="match status" value="1"/>
</dbReference>
<dbReference type="FunFam" id="2.30.170.20:FF:000001">
    <property type="entry name" value="probable ribosome biogenesis protein RLP24"/>
    <property type="match status" value="1"/>
</dbReference>
<dbReference type="Gene3D" id="2.30.170.20">
    <property type="entry name" value="Ribosomal protein L24e"/>
    <property type="match status" value="1"/>
</dbReference>
<dbReference type="HAMAP" id="MF_00773">
    <property type="entry name" value="Ribosomal_eL24"/>
    <property type="match status" value="1"/>
</dbReference>
<dbReference type="InterPro" id="IPR038630">
    <property type="entry name" value="L24e/L24_sf"/>
</dbReference>
<dbReference type="InterPro" id="IPR056366">
    <property type="entry name" value="Ribosomal_eL24"/>
</dbReference>
<dbReference type="InterPro" id="IPR055345">
    <property type="entry name" value="Ribosomal_eL24-rel_arc"/>
</dbReference>
<dbReference type="InterPro" id="IPR000988">
    <property type="entry name" value="Ribosomal_eL24-rel_N"/>
</dbReference>
<dbReference type="InterPro" id="IPR023442">
    <property type="entry name" value="Ribosomal_eL24_CS"/>
</dbReference>
<dbReference type="InterPro" id="IPR011017">
    <property type="entry name" value="TRASH_dom"/>
</dbReference>
<dbReference type="NCBIfam" id="NF034186">
    <property type="entry name" value="PRK14891.1-1"/>
    <property type="match status" value="1"/>
</dbReference>
<dbReference type="PANTHER" id="PTHR10792">
    <property type="entry name" value="60S RIBOSOMAL PROTEIN L24"/>
    <property type="match status" value="1"/>
</dbReference>
<dbReference type="PANTHER" id="PTHR10792:SF1">
    <property type="entry name" value="RIBOSOMAL PROTEIN L24"/>
    <property type="match status" value="1"/>
</dbReference>
<dbReference type="Pfam" id="PF01246">
    <property type="entry name" value="Ribosomal_L24e"/>
    <property type="match status" value="1"/>
</dbReference>
<dbReference type="SMART" id="SM00746">
    <property type="entry name" value="TRASH"/>
    <property type="match status" value="1"/>
</dbReference>
<dbReference type="SUPFAM" id="SSF57716">
    <property type="entry name" value="Glucocorticoid receptor-like (DNA-binding domain)"/>
    <property type="match status" value="1"/>
</dbReference>
<dbReference type="PROSITE" id="PS01073">
    <property type="entry name" value="RIBOSOMAL_L24E"/>
    <property type="match status" value="1"/>
</dbReference>